<reference key="1">
    <citation type="journal article" date="2004" name="Genome Res.">
        <title>The status, quality, and expansion of the NIH full-length cDNA project: the Mammalian Gene Collection (MGC).</title>
        <authorList>
            <consortium name="The MGC Project Team"/>
        </authorList>
    </citation>
    <scope>NUCLEOTIDE SEQUENCE [LARGE SCALE MRNA] (ISOFORM 1)</scope>
    <source>
        <strain>C57BL/6J</strain>
        <tissue>Brain</tissue>
    </source>
</reference>
<reference key="2">
    <citation type="journal article" date="2003" name="DNA Res.">
        <title>Prediction of the coding sequences of mouse homologues of KIAA gene: II. The complete nucleotide sequences of 400 mouse KIAA-homologous cDNAs identified by screening of terminal sequences of cDNA clones randomly sampled from size-fractionated libraries.</title>
        <authorList>
            <person name="Okazaki N."/>
            <person name="Kikuno R."/>
            <person name="Ohara R."/>
            <person name="Inamoto S."/>
            <person name="Aizawa H."/>
            <person name="Yuasa S."/>
            <person name="Nakajima D."/>
            <person name="Nagase T."/>
            <person name="Ohara O."/>
            <person name="Koga H."/>
        </authorList>
    </citation>
    <scope>NUCLEOTIDE SEQUENCE [LARGE SCALE MRNA] OF 64-1371 (ISOFORM 2)</scope>
    <source>
        <tissue>Brain</tissue>
    </source>
</reference>
<reference key="3">
    <citation type="journal article" date="2003" name="Int. J. Oncol.">
        <title>Identification and characterization of human LL5A gene and mouse Ll5a gene in silico.</title>
        <authorList>
            <person name="Katoh M."/>
            <person name="Katoh M."/>
        </authorList>
    </citation>
    <scope>IDENTIFICATION OF THE GENE</scope>
</reference>
<reference key="4">
    <citation type="journal article" date="2006" name="Mol. Cell. Proteomics">
        <title>Comprehensive identification of phosphorylation sites in postsynaptic density preparations.</title>
        <authorList>
            <person name="Trinidad J.C."/>
            <person name="Specht C.G."/>
            <person name="Thalhammer A."/>
            <person name="Schoepfer R."/>
            <person name="Burlingame A.L."/>
        </authorList>
    </citation>
    <scope>IDENTIFICATION BY MASS SPECTROMETRY [LARGE SCALE ANALYSIS]</scope>
    <source>
        <tissue>Brain</tissue>
    </source>
</reference>
<reference key="5">
    <citation type="journal article" date="2007" name="Proc. Natl. Acad. Sci. U.S.A.">
        <title>Large-scale phosphorylation analysis of mouse liver.</title>
        <authorList>
            <person name="Villen J."/>
            <person name="Beausoleil S.A."/>
            <person name="Gerber S.A."/>
            <person name="Gygi S.P."/>
        </authorList>
    </citation>
    <scope>PHOSPHORYLATION [LARGE SCALE ANALYSIS] AT SER-382 AND SER-520</scope>
    <scope>IDENTIFICATION BY MASS SPECTROMETRY [LARGE SCALE ANALYSIS]</scope>
    <source>
        <tissue>Liver</tissue>
    </source>
</reference>
<reference key="6">
    <citation type="journal article" date="2009" name="Immunity">
        <title>The phagosomal proteome in interferon-gamma-activated macrophages.</title>
        <authorList>
            <person name="Trost M."/>
            <person name="English L."/>
            <person name="Lemieux S."/>
            <person name="Courcelles M."/>
            <person name="Desjardins M."/>
            <person name="Thibault P."/>
        </authorList>
    </citation>
    <scope>IDENTIFICATION BY MASS SPECTROMETRY [LARGE SCALE ANALYSIS]</scope>
</reference>
<reference key="7">
    <citation type="journal article" date="2010" name="Cell">
        <title>A tissue-specific atlas of mouse protein phosphorylation and expression.</title>
        <authorList>
            <person name="Huttlin E.L."/>
            <person name="Jedrychowski M.P."/>
            <person name="Elias J.E."/>
            <person name="Goswami T."/>
            <person name="Rad R."/>
            <person name="Beausoleil S.A."/>
            <person name="Villen J."/>
            <person name="Haas W."/>
            <person name="Sowa M.E."/>
            <person name="Gygi S.P."/>
        </authorList>
    </citation>
    <scope>PHOSPHORYLATION [LARGE SCALE ANALYSIS] AT SER-51; SER-223; SER-472; SER-503; SER-520; SER-522; THR-524; SER-535; SER-541; SER-553; SER-557; SER-580; SER-585 AND SER-1022</scope>
    <scope>IDENTIFICATION BY MASS SPECTROMETRY [LARGE SCALE ANALYSIS]</scope>
    <source>
        <tissue>Brain</tissue>
        <tissue>Brown adipose tissue</tissue>
        <tissue>Heart</tissue>
        <tissue>Kidney</tissue>
        <tissue>Lung</tissue>
        <tissue>Pancreas</tissue>
        <tissue>Spleen</tissue>
        <tissue>Testis</tissue>
    </source>
</reference>
<reference key="8">
    <citation type="journal article" date="2014" name="Mol. Cell. Proteomics">
        <title>Immunoaffinity enrichment and mass spectrometry analysis of protein methylation.</title>
        <authorList>
            <person name="Guo A."/>
            <person name="Gu H."/>
            <person name="Zhou J."/>
            <person name="Mulhern D."/>
            <person name="Wang Y."/>
            <person name="Lee K.A."/>
            <person name="Yang V."/>
            <person name="Aguiar M."/>
            <person name="Kornhauser J."/>
            <person name="Jia X."/>
            <person name="Ren J."/>
            <person name="Beausoleil S.A."/>
            <person name="Silva J.C."/>
            <person name="Vemulapalli V."/>
            <person name="Bedford M.T."/>
            <person name="Comb M.J."/>
        </authorList>
    </citation>
    <scope>METHYLATION [LARGE SCALE ANALYSIS] AT ARG-131 AND ARG-514</scope>
    <scope>IDENTIFICATION BY MASS SPECTROMETRY [LARGE SCALE ANALYSIS]</scope>
    <source>
        <tissue>Brain</tissue>
        <tissue>Embryo</tissue>
    </source>
</reference>
<proteinExistence type="evidence at protein level"/>
<sequence length="1371" mass="150070">MDPLNRSQLGPGCKTQAVVQKGPLDLIETGQGLKVQTDKPHLVSLGSGRLSTAITLLPLEEGRTVIGSAARDISLQGPGLAPEHCYIENLRGTLTLYPCGNACTIDGLPVRQPTRLTQGCMLCLGQSTFLRFNHPAEAKWMKSMIPAGVRAPGPTYNPGSAESESLVNGNHTAQPATRAPSACASHSSLVSSIEKDLQEIMDSLVLEEPGAAGKKPAATSPLSPMANGGRYLLSPPTSPGAMSVGSSYENTSPAFSPLSSPASSGSCASHSPSGQEPGPSVPPLVPARSSSYHLALQPPQSRPSGSRSSDSPRLGRKGGHERPPSPGLRGLLTDSPAATVLAEARRTTESPRLGGQLPVVAISLSEYPSSGARSQPASIPGSPKFQSPVPAPRNKIGTLQDRPPSPFREPPGTERVLTSSPSRQLVGRTFSDGLAATRTLQPPESPRLGRRGLDSMRELPPLSPSLSRRALSPLPARTAPDPKLSREVAESPRPRRWAAHGTSPEDFSLTLGARGRRTRSPSPTLGESLAPRKGSFSGRLSPAYSLGSLTGASPRQSPRAQRKLSSGDLRVPIPRERKNSITEISDNEDELLEYHRRQRQERLREQEMERLERQRLETILNLCAEYSRADGGPETGELPSIGEATAALALAGRRPSRGLAGAIVVSGRCGEESGGASQRLWESMERSDEENLKEECSSTESTQQEHEDAPGAKHQGEVLAVEEERAQVLGRVEQLKIRVKELEQQLQEAAREAEMERALLQGEREAERASLQKEQRAVDQLQEKLVALETGIQKDRDKEADALETETKLFEDLEFQQLERESRVEEERELAGQGLLRSKAELLRSVSKRKERLAVLDSQAGQIRAQAVQESERLAREKNAALQLLQKEKEKLNVLERRYHSLTGGRPFPKTTSTLKEMEKLLLPAVDLEQWYQELMSGLGTGLAAASPRSSPPPLPAKASRQLQVYRSKMDSDAASPLPRTRSGPLPSSSGSSSSSSQLSVATLGRSPSPKSALLAQNGTSSLPRNLAATLQDIETKRQLALQQKGHQVIEEQRRRLAELKQKAAAEAQCQWDALHGAGPFSAGPSGFPALMHHSILHHLPAGRERGEEGEHAYDTLSLESSDSMETSISTGGNSACSPDNMSSASGLDMGKIEEMEKMLKEAHAEKSRLMESREREMELRRQALEEERRRREQVERRLQSESARRQQLVEKEVKLREKQFSQARPLTRYLPNRKEDFDLKTHIESSGHGVDTCLHVVLSSKVCRGYLIKMGGKIKSWKKRWFVFDRLKRTLSYYVDKHETKLKGVIYFQAIEEVYYDHLRSAAKSPNPALTFCVKTHDRLYYMVAPSAEAMRIWMDVIVTGAEGYTQFMN</sequence>
<name>PHLB1_MOUSE</name>
<keyword id="KW-0025">Alternative splicing</keyword>
<keyword id="KW-0175">Coiled coil</keyword>
<keyword id="KW-0488">Methylation</keyword>
<keyword id="KW-0597">Phosphoprotein</keyword>
<keyword id="KW-1185">Reference proteome</keyword>
<evidence type="ECO:0000250" key="1"/>
<evidence type="ECO:0000250" key="2">
    <source>
        <dbReference type="UniProtKB" id="Q86UU1"/>
    </source>
</evidence>
<evidence type="ECO:0000255" key="3"/>
<evidence type="ECO:0000255" key="4">
    <source>
        <dbReference type="PROSITE-ProRule" id="PRU00145"/>
    </source>
</evidence>
<evidence type="ECO:0000256" key="5">
    <source>
        <dbReference type="SAM" id="MobiDB-lite"/>
    </source>
</evidence>
<evidence type="ECO:0000303" key="6">
    <source>
    </source>
</evidence>
<evidence type="ECO:0000305" key="7"/>
<evidence type="ECO:0007744" key="8">
    <source>
    </source>
</evidence>
<evidence type="ECO:0007744" key="9">
    <source>
    </source>
</evidence>
<evidence type="ECO:0007744" key="10">
    <source>
    </source>
</evidence>
<comment type="alternative products">
    <event type="alternative splicing"/>
    <isoform>
        <id>Q6PDH0-1</id>
        <name>1</name>
        <sequence type="displayed"/>
    </isoform>
    <isoform>
        <id>Q6PDH0-2</id>
        <name>2</name>
        <sequence type="described" ref="VSP_016741 VSP_016742 VSP_016743"/>
    </isoform>
</comment>
<comment type="domain">
    <text evidence="1">The PH domain mediates the binding to phosphoinositides.</text>
</comment>
<organism>
    <name type="scientific">Mus musculus</name>
    <name type="common">Mouse</name>
    <dbReference type="NCBI Taxonomy" id="10090"/>
    <lineage>
        <taxon>Eukaryota</taxon>
        <taxon>Metazoa</taxon>
        <taxon>Chordata</taxon>
        <taxon>Craniata</taxon>
        <taxon>Vertebrata</taxon>
        <taxon>Euteleostomi</taxon>
        <taxon>Mammalia</taxon>
        <taxon>Eutheria</taxon>
        <taxon>Euarchontoglires</taxon>
        <taxon>Glires</taxon>
        <taxon>Rodentia</taxon>
        <taxon>Myomorpha</taxon>
        <taxon>Muroidea</taxon>
        <taxon>Muridae</taxon>
        <taxon>Murinae</taxon>
        <taxon>Mus</taxon>
        <taxon>Mus</taxon>
    </lineage>
</organism>
<protein>
    <recommendedName>
        <fullName>Pleckstrin homology-like domain family B member 1</fullName>
    </recommendedName>
    <alternativeName>
        <fullName>Protein LL5-alpha</fullName>
    </alternativeName>
</protein>
<accession>Q6PDH0</accession>
<accession>Q80TV2</accession>
<dbReference type="EMBL" id="BC058712">
    <property type="protein sequence ID" value="AAH58712.1"/>
    <property type="molecule type" value="mRNA"/>
</dbReference>
<dbReference type="EMBL" id="AK122336">
    <property type="protein sequence ID" value="BAC65618.1"/>
    <property type="molecule type" value="mRNA"/>
</dbReference>
<dbReference type="CCDS" id="CCDS23118.1">
    <molecule id="Q6PDH0-1"/>
</dbReference>
<dbReference type="RefSeq" id="NP_705765.3">
    <molecule id="Q6PDH0-1"/>
    <property type="nucleotide sequence ID" value="NM_153537.4"/>
</dbReference>
<dbReference type="SMR" id="Q6PDH0"/>
<dbReference type="BioGRID" id="221937">
    <property type="interactions" value="8"/>
</dbReference>
<dbReference type="FunCoup" id="Q6PDH0">
    <property type="interactions" value="1413"/>
</dbReference>
<dbReference type="STRING" id="10090.ENSMUSP00000034611"/>
<dbReference type="ChEMBL" id="CHEMBL4879480"/>
<dbReference type="GlyGen" id="Q6PDH0">
    <property type="glycosylation" value="2 sites, 1 N-linked glycan (1 site), 1 O-linked glycan (1 site)"/>
</dbReference>
<dbReference type="iPTMnet" id="Q6PDH0"/>
<dbReference type="PhosphoSitePlus" id="Q6PDH0"/>
<dbReference type="jPOST" id="Q6PDH0"/>
<dbReference type="PaxDb" id="10090-ENSMUSP00000034611"/>
<dbReference type="PeptideAtlas" id="Q6PDH0"/>
<dbReference type="ProteomicsDB" id="289742">
    <molecule id="Q6PDH0-1"/>
</dbReference>
<dbReference type="ProteomicsDB" id="289743">
    <molecule id="Q6PDH0-2"/>
</dbReference>
<dbReference type="Pumba" id="Q6PDH0"/>
<dbReference type="Antibodypedia" id="45815">
    <property type="antibodies" value="68 antibodies from 14 providers"/>
</dbReference>
<dbReference type="DNASU" id="102693"/>
<dbReference type="Ensembl" id="ENSMUST00000034611.15">
    <molecule id="Q6PDH0-1"/>
    <property type="protein sequence ID" value="ENSMUSP00000034611.9"/>
    <property type="gene ID" value="ENSMUSG00000048537.17"/>
</dbReference>
<dbReference type="GeneID" id="102693"/>
<dbReference type="KEGG" id="mmu:102693"/>
<dbReference type="UCSC" id="uc009peh.2">
    <molecule id="Q6PDH0-1"/>
    <property type="organism name" value="mouse"/>
</dbReference>
<dbReference type="AGR" id="MGI:2143230"/>
<dbReference type="CTD" id="23187"/>
<dbReference type="MGI" id="MGI:2143230">
    <property type="gene designation" value="Phldb1"/>
</dbReference>
<dbReference type="VEuPathDB" id="HostDB:ENSMUSG00000048537"/>
<dbReference type="eggNOG" id="ENOG502QPZY">
    <property type="taxonomic scope" value="Eukaryota"/>
</dbReference>
<dbReference type="GeneTree" id="ENSGT00940000155231"/>
<dbReference type="InParanoid" id="Q6PDH0"/>
<dbReference type="OMA" id="DKKSPFQ"/>
<dbReference type="TreeFam" id="TF329165"/>
<dbReference type="BioGRID-ORCS" id="102693">
    <property type="hits" value="6 hits in 76 CRISPR screens"/>
</dbReference>
<dbReference type="CD-CODE" id="CE726F99">
    <property type="entry name" value="Postsynaptic density"/>
</dbReference>
<dbReference type="ChiTaRS" id="Phldb1">
    <property type="organism name" value="mouse"/>
</dbReference>
<dbReference type="PRO" id="PR:Q6PDH0"/>
<dbReference type="Proteomes" id="UP000000589">
    <property type="component" value="Chromosome 9"/>
</dbReference>
<dbReference type="RNAct" id="Q6PDH0">
    <property type="molecule type" value="protein"/>
</dbReference>
<dbReference type="Bgee" id="ENSMUSG00000048537">
    <property type="expression patterns" value="Expressed in saccule of membranous labyrinth and 259 other cell types or tissues"/>
</dbReference>
<dbReference type="ExpressionAtlas" id="Q6PDH0">
    <property type="expression patterns" value="baseline and differential"/>
</dbReference>
<dbReference type="CDD" id="cd22713">
    <property type="entry name" value="FHA_PHLB1"/>
    <property type="match status" value="1"/>
</dbReference>
<dbReference type="CDD" id="cd14673">
    <property type="entry name" value="PH_PHLDB1_2"/>
    <property type="match status" value="1"/>
</dbReference>
<dbReference type="FunFam" id="2.30.29.30:FF:000006">
    <property type="entry name" value="Pleckstrin homology like domain family B member 1"/>
    <property type="match status" value="1"/>
</dbReference>
<dbReference type="FunFam" id="2.60.200.20:FF:000004">
    <property type="entry name" value="pleckstrin homology-like domain family B member 1 isoform X1"/>
    <property type="match status" value="1"/>
</dbReference>
<dbReference type="Gene3D" id="2.60.200.20">
    <property type="match status" value="1"/>
</dbReference>
<dbReference type="Gene3D" id="2.30.29.30">
    <property type="entry name" value="Pleckstrin-homology domain (PH domain)/Phosphotyrosine-binding domain (PTB)"/>
    <property type="match status" value="1"/>
</dbReference>
<dbReference type="InterPro" id="IPR000253">
    <property type="entry name" value="FHA_dom"/>
</dbReference>
<dbReference type="InterPro" id="IPR011993">
    <property type="entry name" value="PH-like_dom_sf"/>
</dbReference>
<dbReference type="InterPro" id="IPR052212">
    <property type="entry name" value="PH-like_domain"/>
</dbReference>
<dbReference type="InterPro" id="IPR001849">
    <property type="entry name" value="PH_domain"/>
</dbReference>
<dbReference type="InterPro" id="IPR037810">
    <property type="entry name" value="PHLDB1/2/3_PH"/>
</dbReference>
<dbReference type="InterPro" id="IPR008984">
    <property type="entry name" value="SMAD_FHA_dom_sf"/>
</dbReference>
<dbReference type="PANTHER" id="PTHR12156:SF23">
    <property type="entry name" value="PLECKSTRIN HOMOLOGY-LIKE DOMAIN FAMILY B MEMBER 1"/>
    <property type="match status" value="1"/>
</dbReference>
<dbReference type="PANTHER" id="PTHR12156">
    <property type="entry name" value="PLECKSTRIN HOMOLOGY-LIKE DOMAIN, FAMILY B, MEMBER 3"/>
    <property type="match status" value="1"/>
</dbReference>
<dbReference type="Pfam" id="PF00498">
    <property type="entry name" value="FHA"/>
    <property type="match status" value="1"/>
</dbReference>
<dbReference type="Pfam" id="PF00169">
    <property type="entry name" value="PH"/>
    <property type="match status" value="1"/>
</dbReference>
<dbReference type="SMART" id="SM00233">
    <property type="entry name" value="PH"/>
    <property type="match status" value="1"/>
</dbReference>
<dbReference type="SUPFAM" id="SSF50729">
    <property type="entry name" value="PH domain-like"/>
    <property type="match status" value="1"/>
</dbReference>
<dbReference type="SUPFAM" id="SSF49879">
    <property type="entry name" value="SMAD/FHA domain"/>
    <property type="match status" value="1"/>
</dbReference>
<dbReference type="PROSITE" id="PS50003">
    <property type="entry name" value="PH_DOMAIN"/>
    <property type="match status" value="1"/>
</dbReference>
<gene>
    <name type="primary">Phldb1</name>
    <name type="synonym">Kiaa0638</name>
    <name type="synonym">Ll5a</name>
</gene>
<feature type="chain" id="PRO_0000053892" description="Pleckstrin homology-like domain family B member 1">
    <location>
        <begin position="1"/>
        <end position="1371"/>
    </location>
</feature>
<feature type="domain" description="FHA">
    <location>
        <begin position="64"/>
        <end position="125"/>
    </location>
</feature>
<feature type="domain" description="PH" evidence="4">
    <location>
        <begin position="1261"/>
        <end position="1364"/>
    </location>
</feature>
<feature type="region of interest" description="Disordered" evidence="5">
    <location>
        <begin position="153"/>
        <end position="182"/>
    </location>
</feature>
<feature type="region of interest" description="Disordered" evidence="5">
    <location>
        <begin position="211"/>
        <end position="336"/>
    </location>
</feature>
<feature type="region of interest" description="Disordered" evidence="5">
    <location>
        <begin position="368"/>
        <end position="573"/>
    </location>
</feature>
<feature type="region of interest" description="Disordered" evidence="5">
    <location>
        <begin position="672"/>
        <end position="714"/>
    </location>
</feature>
<feature type="region of interest" description="Disordered" evidence="5">
    <location>
        <begin position="942"/>
        <end position="1020"/>
    </location>
</feature>
<feature type="region of interest" description="Disordered" evidence="5">
    <location>
        <begin position="1124"/>
        <end position="1143"/>
    </location>
</feature>
<feature type="coiled-coil region" evidence="3">
    <location>
        <begin position="688"/>
        <end position="798"/>
    </location>
</feature>
<feature type="coiled-coil region" evidence="3">
    <location>
        <begin position="1150"/>
        <end position="1216"/>
    </location>
</feature>
<feature type="compositionally biased region" description="Polar residues" evidence="5">
    <location>
        <begin position="157"/>
        <end position="175"/>
    </location>
</feature>
<feature type="compositionally biased region" description="Low complexity" evidence="5">
    <location>
        <begin position="252"/>
        <end position="273"/>
    </location>
</feature>
<feature type="compositionally biased region" description="Low complexity" evidence="5">
    <location>
        <begin position="296"/>
        <end position="312"/>
    </location>
</feature>
<feature type="compositionally biased region" description="Polar residues" evidence="5">
    <location>
        <begin position="368"/>
        <end position="377"/>
    </location>
</feature>
<feature type="compositionally biased region" description="Low complexity" evidence="5">
    <location>
        <begin position="464"/>
        <end position="477"/>
    </location>
</feature>
<feature type="compositionally biased region" description="Basic and acidic residues" evidence="5">
    <location>
        <begin position="483"/>
        <end position="493"/>
    </location>
</feature>
<feature type="compositionally biased region" description="Polar residues" evidence="5">
    <location>
        <begin position="547"/>
        <end position="559"/>
    </location>
</feature>
<feature type="compositionally biased region" description="Basic and acidic residues" evidence="5">
    <location>
        <begin position="682"/>
        <end position="696"/>
    </location>
</feature>
<feature type="compositionally biased region" description="Basic and acidic residues" evidence="5">
    <location>
        <begin position="703"/>
        <end position="714"/>
    </location>
</feature>
<feature type="compositionally biased region" description="Low complexity" evidence="5">
    <location>
        <begin position="976"/>
        <end position="997"/>
    </location>
</feature>
<feature type="modified residue" description="Phosphoserine" evidence="9">
    <location>
        <position position="51"/>
    </location>
</feature>
<feature type="modified residue" description="Asymmetric dimethylarginine" evidence="10">
    <location>
        <position position="131"/>
    </location>
</feature>
<feature type="modified residue" description="Phosphoserine" evidence="2">
    <location>
        <position position="192"/>
    </location>
</feature>
<feature type="modified residue" description="Phosphoserine" evidence="2">
    <location>
        <position position="220"/>
    </location>
</feature>
<feature type="modified residue" description="Phosphoserine" evidence="9">
    <location>
        <position position="223"/>
    </location>
</feature>
<feature type="modified residue" description="Phosphoserine" evidence="2">
    <location>
        <position position="325"/>
    </location>
</feature>
<feature type="modified residue" description="Phosphoserine" evidence="2">
    <location>
        <position position="335"/>
    </location>
</feature>
<feature type="modified residue" description="Phosphoserine" evidence="8">
    <location>
        <position position="382"/>
    </location>
</feature>
<feature type="modified residue" description="Phosphoserine" evidence="2">
    <location>
        <position position="405"/>
    </location>
</feature>
<feature type="modified residue" description="Phosphoserine" evidence="2">
    <location>
        <position position="431"/>
    </location>
</feature>
<feature type="modified residue" description="Phosphoserine" evidence="2">
    <location>
        <position position="445"/>
    </location>
</feature>
<feature type="modified residue" description="Phosphoserine" evidence="2">
    <location>
        <position position="463"/>
    </location>
</feature>
<feature type="modified residue" description="Phosphoserine" evidence="9">
    <location>
        <position position="472"/>
    </location>
</feature>
<feature type="modified residue" description="Phosphoserine" evidence="2">
    <location>
        <position position="491"/>
    </location>
</feature>
<feature type="modified residue" description="Phosphoserine" evidence="9">
    <location>
        <position position="503"/>
    </location>
</feature>
<feature type="modified residue" description="Omega-N-methylarginine" evidence="10">
    <location>
        <position position="514"/>
    </location>
</feature>
<feature type="modified residue" description="Phosphoserine" evidence="8 9">
    <location>
        <position position="520"/>
    </location>
</feature>
<feature type="modified residue" description="Phosphoserine" evidence="9">
    <location>
        <position position="522"/>
    </location>
</feature>
<feature type="modified residue" description="Phosphothreonine" evidence="9">
    <location>
        <position position="524"/>
    </location>
</feature>
<feature type="modified residue" description="Phosphoserine" evidence="9">
    <location>
        <position position="535"/>
    </location>
</feature>
<feature type="modified residue" description="Phosphoserine" evidence="9">
    <location>
        <position position="541"/>
    </location>
</feature>
<feature type="modified residue" description="Phosphoserine" evidence="9">
    <location>
        <position position="553"/>
    </location>
</feature>
<feature type="modified residue" description="Phosphoserine" evidence="9">
    <location>
        <position position="557"/>
    </location>
</feature>
<feature type="modified residue" description="Phosphoserine" evidence="2">
    <location>
        <position position="565"/>
    </location>
</feature>
<feature type="modified residue" description="Phosphoserine" evidence="9">
    <location>
        <position position="580"/>
    </location>
</feature>
<feature type="modified residue" description="Phosphoserine" evidence="9">
    <location>
        <position position="585"/>
    </location>
</feature>
<feature type="modified residue" description="Phosphoserine" evidence="2">
    <location>
        <position position="683"/>
    </location>
</feature>
<feature type="modified residue" description="Phosphoserine" evidence="2">
    <location>
        <position position="976"/>
    </location>
</feature>
<feature type="modified residue" description="Phosphoserine" evidence="9">
    <location>
        <position position="1022"/>
    </location>
</feature>
<feature type="splice variant" id="VSP_016741" description="In isoform 2." evidence="6">
    <original>E</original>
    <variation>EYVTLEQLRVVWGTPPMPPSPSPGLPSWASASQDLAPITCLPPMLPSSFASITRSSK</variation>
    <location>
        <position position="917"/>
    </location>
</feature>
<feature type="splice variant" id="VSP_016742" description="In isoform 2." evidence="6">
    <original>R</original>
    <variation>RVRLTGARRQQV</variation>
    <location>
        <position position="1174"/>
    </location>
</feature>
<feature type="splice variant" id="VSP_016743" description="In isoform 2." evidence="6">
    <original>K</original>
    <variation>KKRFFHFTMVTE</variation>
    <location>
        <position position="1325"/>
    </location>
</feature>
<feature type="sequence conflict" description="In Ref. 2; BAC65618." evidence="7" ref="2">
    <original>R</original>
    <variation>H</variation>
    <location>
        <position position="402"/>
    </location>
</feature>